<name>DNAG_METJA</name>
<dbReference type="EC" id="2.7.7.101" evidence="1"/>
<dbReference type="EMBL" id="L77117">
    <property type="protein sequence ID" value="AAB99210.1"/>
    <property type="molecule type" value="Genomic_DNA"/>
</dbReference>
<dbReference type="PIR" id="E64450">
    <property type="entry name" value="E64450"/>
</dbReference>
<dbReference type="SMR" id="Q58603"/>
<dbReference type="FunCoup" id="Q58603">
    <property type="interactions" value="19"/>
</dbReference>
<dbReference type="STRING" id="243232.MJ_1206"/>
<dbReference type="PaxDb" id="243232-MJ_1206"/>
<dbReference type="EnsemblBacteria" id="AAB99210">
    <property type="protein sequence ID" value="AAB99210"/>
    <property type="gene ID" value="MJ_1206"/>
</dbReference>
<dbReference type="KEGG" id="mja:MJ_1206"/>
<dbReference type="eggNOG" id="arCOG04281">
    <property type="taxonomic scope" value="Archaea"/>
</dbReference>
<dbReference type="HOGENOM" id="CLU_034626_0_0_2"/>
<dbReference type="InParanoid" id="Q58603"/>
<dbReference type="PhylomeDB" id="Q58603"/>
<dbReference type="Proteomes" id="UP000000805">
    <property type="component" value="Chromosome"/>
</dbReference>
<dbReference type="GO" id="GO:0005737">
    <property type="term" value="C:cytoplasm"/>
    <property type="evidence" value="ECO:0000318"/>
    <property type="project" value="GO_Central"/>
</dbReference>
<dbReference type="GO" id="GO:0000428">
    <property type="term" value="C:DNA-directed RNA polymerase complex"/>
    <property type="evidence" value="ECO:0007669"/>
    <property type="project" value="UniProtKB-KW"/>
</dbReference>
<dbReference type="GO" id="GO:0000178">
    <property type="term" value="C:exosome (RNase complex)"/>
    <property type="evidence" value="ECO:0007669"/>
    <property type="project" value="InterPro"/>
</dbReference>
<dbReference type="GO" id="GO:1990077">
    <property type="term" value="C:primosome complex"/>
    <property type="evidence" value="ECO:0007669"/>
    <property type="project" value="UniProtKB-KW"/>
</dbReference>
<dbReference type="GO" id="GO:0003899">
    <property type="term" value="F:DNA-directed RNA polymerase activity"/>
    <property type="evidence" value="ECO:0007669"/>
    <property type="project" value="InterPro"/>
</dbReference>
<dbReference type="GO" id="GO:0046872">
    <property type="term" value="F:metal ion binding"/>
    <property type="evidence" value="ECO:0007669"/>
    <property type="project" value="UniProtKB-KW"/>
</dbReference>
<dbReference type="GO" id="GO:0008143">
    <property type="term" value="F:poly(A) binding"/>
    <property type="evidence" value="ECO:0007669"/>
    <property type="project" value="InterPro"/>
</dbReference>
<dbReference type="GO" id="GO:0006269">
    <property type="term" value="P:DNA replication, synthesis of primer"/>
    <property type="evidence" value="ECO:0000318"/>
    <property type="project" value="GO_Central"/>
</dbReference>
<dbReference type="CDD" id="cd01029">
    <property type="entry name" value="TOPRIM_primases"/>
    <property type="match status" value="1"/>
</dbReference>
<dbReference type="FunFam" id="3.40.1360.10:FF:000010">
    <property type="entry name" value="DNA primase DnaG"/>
    <property type="match status" value="1"/>
</dbReference>
<dbReference type="Gene3D" id="3.40.1360.10">
    <property type="match status" value="1"/>
</dbReference>
<dbReference type="HAMAP" id="MF_00007">
    <property type="entry name" value="DNA_primase_DnaG_arc"/>
    <property type="match status" value="1"/>
</dbReference>
<dbReference type="InterPro" id="IPR050219">
    <property type="entry name" value="DnaG_primase"/>
</dbReference>
<dbReference type="InterPro" id="IPR020607">
    <property type="entry name" value="Primase_DnaG_arc"/>
</dbReference>
<dbReference type="InterPro" id="IPR034154">
    <property type="entry name" value="TOPRIM_DnaG/twinkle"/>
</dbReference>
<dbReference type="InterPro" id="IPR006171">
    <property type="entry name" value="TOPRIM_dom"/>
</dbReference>
<dbReference type="NCBIfam" id="NF003108">
    <property type="entry name" value="PRK04031.1-1"/>
    <property type="match status" value="1"/>
</dbReference>
<dbReference type="PANTHER" id="PTHR30313">
    <property type="entry name" value="DNA PRIMASE"/>
    <property type="match status" value="1"/>
</dbReference>
<dbReference type="PANTHER" id="PTHR30313:SF2">
    <property type="entry name" value="DNA PRIMASE"/>
    <property type="match status" value="1"/>
</dbReference>
<dbReference type="Pfam" id="PF13662">
    <property type="entry name" value="Toprim_4"/>
    <property type="match status" value="1"/>
</dbReference>
<dbReference type="SMART" id="SM00493">
    <property type="entry name" value="TOPRIM"/>
    <property type="match status" value="1"/>
</dbReference>
<dbReference type="SUPFAM" id="SSF56731">
    <property type="entry name" value="DNA primase core"/>
    <property type="match status" value="1"/>
</dbReference>
<dbReference type="PROSITE" id="PS50880">
    <property type="entry name" value="TOPRIM"/>
    <property type="match status" value="1"/>
</dbReference>
<reference key="1">
    <citation type="journal article" date="1996" name="Science">
        <title>Complete genome sequence of the methanogenic archaeon, Methanococcus jannaschii.</title>
        <authorList>
            <person name="Bult C.J."/>
            <person name="White O."/>
            <person name="Olsen G.J."/>
            <person name="Zhou L."/>
            <person name="Fleischmann R.D."/>
            <person name="Sutton G.G."/>
            <person name="Blake J.A."/>
            <person name="FitzGerald L.M."/>
            <person name="Clayton R.A."/>
            <person name="Gocayne J.D."/>
            <person name="Kerlavage A.R."/>
            <person name="Dougherty B.A."/>
            <person name="Tomb J.-F."/>
            <person name="Adams M.D."/>
            <person name="Reich C.I."/>
            <person name="Overbeek R."/>
            <person name="Kirkness E.F."/>
            <person name="Weinstock K.G."/>
            <person name="Merrick J.M."/>
            <person name="Glodek A."/>
            <person name="Scott J.L."/>
            <person name="Geoghagen N.S.M."/>
            <person name="Weidman J.F."/>
            <person name="Fuhrmann J.L."/>
            <person name="Nguyen D."/>
            <person name="Utterback T.R."/>
            <person name="Kelley J.M."/>
            <person name="Peterson J.D."/>
            <person name="Sadow P.W."/>
            <person name="Hanna M.C."/>
            <person name="Cotton M.D."/>
            <person name="Roberts K.M."/>
            <person name="Hurst M.A."/>
            <person name="Kaine B.P."/>
            <person name="Borodovsky M."/>
            <person name="Klenk H.-P."/>
            <person name="Fraser C.M."/>
            <person name="Smith H.O."/>
            <person name="Woese C.R."/>
            <person name="Venter J.C."/>
        </authorList>
    </citation>
    <scope>NUCLEOTIDE SEQUENCE [LARGE SCALE GENOMIC DNA]</scope>
    <source>
        <strain>ATCC 43067 / DSM 2661 / JAL-1 / JCM 10045 / NBRC 100440</strain>
    </source>
</reference>
<sequence>MIIMDLGTTKYIIYAELIADGYVEKHDVIGAIFGQTEGLLGDELDLRELQKTGRVGRIDVELTNINGKSIAKITVPSSLDRIETSILAATLETIDRVGPCVATVKVIDIEDIRKKKREYIVERAKEILKQLMSNIDVNTIIEEVKESVRMGEIIEYGPERLPAGPAVDSSDDIIVVEGRADVLNLLRCGIKNVIAVEGTSVPKTIIELSKKKIVTVFTDGDRGGELILKELLQVCDVDFVARAPPGKEVEELSKKEIMKCLRSKIPAEHILAQILKDKQKIDEKVCKDEIRNMGIQTIPEIKPEISITSNDDVEVSSVECNPSNNEELPPKYNKYRKFYEKLIELEDSKVLIINGDKEEIVSIEELINNTDNYKSIDAIIINGTVTQKLIDILYEKTNLIFCKDAKIIKKPVNLTLITFGDLNA</sequence>
<keyword id="KW-0235">DNA replication</keyword>
<keyword id="KW-0240">DNA-directed RNA polymerase</keyword>
<keyword id="KW-0460">Magnesium</keyword>
<keyword id="KW-0479">Metal-binding</keyword>
<keyword id="KW-0548">Nucleotidyltransferase</keyword>
<keyword id="KW-0639">Primosome</keyword>
<keyword id="KW-1185">Reference proteome</keyword>
<keyword id="KW-0804">Transcription</keyword>
<keyword id="KW-0808">Transferase</keyword>
<evidence type="ECO:0000255" key="1">
    <source>
        <dbReference type="HAMAP-Rule" id="MF_00007"/>
    </source>
</evidence>
<protein>
    <recommendedName>
        <fullName evidence="1">DNA primase DnaG</fullName>
        <ecNumber evidence="1">2.7.7.101</ecNumber>
    </recommendedName>
</protein>
<comment type="function">
    <text evidence="1">RNA polymerase that catalyzes the synthesis of short RNA molecules used as primers for DNA polymerase during DNA replication.</text>
</comment>
<comment type="catalytic activity">
    <reaction evidence="1">
        <text>ssDNA + n NTP = ssDNA/pppN(pN)n-1 hybrid + (n-1) diphosphate.</text>
        <dbReference type="EC" id="2.7.7.101"/>
    </reaction>
</comment>
<comment type="cofactor">
    <cofactor evidence="1">
        <name>Mg(2+)</name>
        <dbReference type="ChEBI" id="CHEBI:18420"/>
    </cofactor>
    <text evidence="1">Binds two Mg(2+) per subunit.</text>
</comment>
<comment type="subunit">
    <text evidence="1">Forms a ternary complex with MCM helicase and DNA.</text>
</comment>
<comment type="similarity">
    <text evidence="1">Belongs to the archaeal DnaG primase family.</text>
</comment>
<gene>
    <name evidence="1" type="primary">dnaG</name>
    <name type="ordered locus">MJ1206</name>
</gene>
<accession>Q58603</accession>
<feature type="chain" id="PRO_0000144125" description="DNA primase DnaG">
    <location>
        <begin position="1"/>
        <end position="424"/>
    </location>
</feature>
<feature type="domain" description="Toprim" evidence="1">
    <location>
        <begin position="171"/>
        <end position="245"/>
    </location>
</feature>
<feature type="binding site" evidence="1">
    <location>
        <position position="177"/>
    </location>
    <ligand>
        <name>Mg(2+)</name>
        <dbReference type="ChEBI" id="CHEBI:18420"/>
        <label>1</label>
        <note>catalytic</note>
    </ligand>
</feature>
<feature type="binding site" evidence="1">
    <location>
        <position position="219"/>
    </location>
    <ligand>
        <name>Mg(2+)</name>
        <dbReference type="ChEBI" id="CHEBI:18420"/>
        <label>1</label>
        <note>catalytic</note>
    </ligand>
</feature>
<feature type="binding site" evidence="1">
    <location>
        <position position="219"/>
    </location>
    <ligand>
        <name>Mg(2+)</name>
        <dbReference type="ChEBI" id="CHEBI:18420"/>
        <label>2</label>
    </ligand>
</feature>
<feature type="binding site" evidence="1">
    <location>
        <position position="221"/>
    </location>
    <ligand>
        <name>Mg(2+)</name>
        <dbReference type="ChEBI" id="CHEBI:18420"/>
        <label>2</label>
    </ligand>
</feature>
<proteinExistence type="inferred from homology"/>
<organism>
    <name type="scientific">Methanocaldococcus jannaschii (strain ATCC 43067 / DSM 2661 / JAL-1 / JCM 10045 / NBRC 100440)</name>
    <name type="common">Methanococcus jannaschii</name>
    <dbReference type="NCBI Taxonomy" id="243232"/>
    <lineage>
        <taxon>Archaea</taxon>
        <taxon>Methanobacteriati</taxon>
        <taxon>Methanobacteriota</taxon>
        <taxon>Methanomada group</taxon>
        <taxon>Methanococci</taxon>
        <taxon>Methanococcales</taxon>
        <taxon>Methanocaldococcaceae</taxon>
        <taxon>Methanocaldococcus</taxon>
    </lineage>
</organism>